<sequence length="185" mass="21071">MKTAQELRVGNVFMLGKDPMVVLKTEFTKSGRNSSVVKMKYKNLLTESPGEAVYKADDKFDIVVLDKKEVNYSYFASPMYVFMDAEFNQYEVEEETMSDALSFLEDGMPCEVVFYNDKPISVELPNTVVREIIYTEPAIKGDTTGKVLKPAKIPTGFELAVPLFCEIGDKIEIDTRTREYRSRVK</sequence>
<protein>
    <recommendedName>
        <fullName evidence="1">Elongation factor P</fullName>
        <shortName evidence="1">EF-P</shortName>
    </recommendedName>
</protein>
<accession>Q82W02</accession>
<proteinExistence type="inferred from homology"/>
<feature type="chain" id="PRO_0000094296" description="Elongation factor P">
    <location>
        <begin position="1"/>
        <end position="185"/>
    </location>
</feature>
<evidence type="ECO:0000255" key="1">
    <source>
        <dbReference type="HAMAP-Rule" id="MF_00141"/>
    </source>
</evidence>
<name>EFP_NITEU</name>
<reference key="1">
    <citation type="journal article" date="2003" name="J. Bacteriol.">
        <title>Complete genome sequence of the ammonia-oxidizing bacterium and obligate chemolithoautotroph Nitrosomonas europaea.</title>
        <authorList>
            <person name="Chain P."/>
            <person name="Lamerdin J.E."/>
            <person name="Larimer F.W."/>
            <person name="Regala W."/>
            <person name="Lao V."/>
            <person name="Land M.L."/>
            <person name="Hauser L."/>
            <person name="Hooper A.B."/>
            <person name="Klotz M.G."/>
            <person name="Norton J."/>
            <person name="Sayavedra-Soto L.A."/>
            <person name="Arciero D.M."/>
            <person name="Hommes N.G."/>
            <person name="Whittaker M.M."/>
            <person name="Arp D.J."/>
        </authorList>
    </citation>
    <scope>NUCLEOTIDE SEQUENCE [LARGE SCALE GENOMIC DNA]</scope>
    <source>
        <strain>ATCC 19718 / CIP 103999 / KCTC 2705 / NBRC 14298</strain>
    </source>
</reference>
<organism>
    <name type="scientific">Nitrosomonas europaea (strain ATCC 19718 / CIP 103999 / KCTC 2705 / NBRC 14298)</name>
    <dbReference type="NCBI Taxonomy" id="228410"/>
    <lineage>
        <taxon>Bacteria</taxon>
        <taxon>Pseudomonadati</taxon>
        <taxon>Pseudomonadota</taxon>
        <taxon>Betaproteobacteria</taxon>
        <taxon>Nitrosomonadales</taxon>
        <taxon>Nitrosomonadaceae</taxon>
        <taxon>Nitrosomonas</taxon>
    </lineage>
</organism>
<keyword id="KW-0963">Cytoplasm</keyword>
<keyword id="KW-0251">Elongation factor</keyword>
<keyword id="KW-0648">Protein biosynthesis</keyword>
<keyword id="KW-1185">Reference proteome</keyword>
<gene>
    <name evidence="1" type="primary">efp</name>
    <name type="ordered locus">NE0897</name>
</gene>
<dbReference type="EMBL" id="AL954747">
    <property type="protein sequence ID" value="CAD84808.1"/>
    <property type="molecule type" value="Genomic_DNA"/>
</dbReference>
<dbReference type="RefSeq" id="WP_011111508.1">
    <property type="nucleotide sequence ID" value="NC_004757.1"/>
</dbReference>
<dbReference type="SMR" id="Q82W02"/>
<dbReference type="STRING" id="228410.NE0897"/>
<dbReference type="GeneID" id="87104088"/>
<dbReference type="KEGG" id="neu:NE0897"/>
<dbReference type="eggNOG" id="COG0231">
    <property type="taxonomic scope" value="Bacteria"/>
</dbReference>
<dbReference type="HOGENOM" id="CLU_074944_2_1_4"/>
<dbReference type="OrthoDB" id="9801844at2"/>
<dbReference type="PhylomeDB" id="Q82W02"/>
<dbReference type="UniPathway" id="UPA00345"/>
<dbReference type="Proteomes" id="UP000001416">
    <property type="component" value="Chromosome"/>
</dbReference>
<dbReference type="GO" id="GO:0005737">
    <property type="term" value="C:cytoplasm"/>
    <property type="evidence" value="ECO:0007669"/>
    <property type="project" value="UniProtKB-SubCell"/>
</dbReference>
<dbReference type="GO" id="GO:0003746">
    <property type="term" value="F:translation elongation factor activity"/>
    <property type="evidence" value="ECO:0007669"/>
    <property type="project" value="UniProtKB-UniRule"/>
</dbReference>
<dbReference type="GO" id="GO:0043043">
    <property type="term" value="P:peptide biosynthetic process"/>
    <property type="evidence" value="ECO:0007669"/>
    <property type="project" value="InterPro"/>
</dbReference>
<dbReference type="CDD" id="cd04470">
    <property type="entry name" value="S1_EF-P_repeat_1"/>
    <property type="match status" value="1"/>
</dbReference>
<dbReference type="CDD" id="cd05794">
    <property type="entry name" value="S1_EF-P_repeat_2"/>
    <property type="match status" value="1"/>
</dbReference>
<dbReference type="FunFam" id="2.30.30.30:FF:000003">
    <property type="entry name" value="Elongation factor P"/>
    <property type="match status" value="1"/>
</dbReference>
<dbReference type="FunFam" id="2.40.50.140:FF:000004">
    <property type="entry name" value="Elongation factor P"/>
    <property type="match status" value="1"/>
</dbReference>
<dbReference type="FunFam" id="2.40.50.140:FF:000009">
    <property type="entry name" value="Elongation factor P"/>
    <property type="match status" value="1"/>
</dbReference>
<dbReference type="Gene3D" id="2.30.30.30">
    <property type="match status" value="1"/>
</dbReference>
<dbReference type="Gene3D" id="2.40.50.140">
    <property type="entry name" value="Nucleic acid-binding proteins"/>
    <property type="match status" value="2"/>
</dbReference>
<dbReference type="HAMAP" id="MF_00141">
    <property type="entry name" value="EF_P"/>
    <property type="match status" value="1"/>
</dbReference>
<dbReference type="InterPro" id="IPR015365">
    <property type="entry name" value="Elong-fact-P_C"/>
</dbReference>
<dbReference type="InterPro" id="IPR012340">
    <property type="entry name" value="NA-bd_OB-fold"/>
</dbReference>
<dbReference type="InterPro" id="IPR014722">
    <property type="entry name" value="Rib_uL2_dom2"/>
</dbReference>
<dbReference type="InterPro" id="IPR020599">
    <property type="entry name" value="Transl_elong_fac_P/YeiP"/>
</dbReference>
<dbReference type="InterPro" id="IPR013185">
    <property type="entry name" value="Transl_elong_KOW-like"/>
</dbReference>
<dbReference type="InterPro" id="IPR001059">
    <property type="entry name" value="Transl_elong_P/YeiP_cen"/>
</dbReference>
<dbReference type="InterPro" id="IPR013852">
    <property type="entry name" value="Transl_elong_P/YeiP_CS"/>
</dbReference>
<dbReference type="InterPro" id="IPR011768">
    <property type="entry name" value="Transl_elongation_fac_P"/>
</dbReference>
<dbReference type="InterPro" id="IPR008991">
    <property type="entry name" value="Translation_prot_SH3-like_sf"/>
</dbReference>
<dbReference type="NCBIfam" id="TIGR00038">
    <property type="entry name" value="efp"/>
    <property type="match status" value="1"/>
</dbReference>
<dbReference type="NCBIfam" id="NF001810">
    <property type="entry name" value="PRK00529.1"/>
    <property type="match status" value="1"/>
</dbReference>
<dbReference type="PANTHER" id="PTHR30053">
    <property type="entry name" value="ELONGATION FACTOR P"/>
    <property type="match status" value="1"/>
</dbReference>
<dbReference type="PANTHER" id="PTHR30053:SF12">
    <property type="entry name" value="ELONGATION FACTOR P (EF-P) FAMILY PROTEIN"/>
    <property type="match status" value="1"/>
</dbReference>
<dbReference type="Pfam" id="PF01132">
    <property type="entry name" value="EFP"/>
    <property type="match status" value="1"/>
</dbReference>
<dbReference type="Pfam" id="PF08207">
    <property type="entry name" value="EFP_N"/>
    <property type="match status" value="1"/>
</dbReference>
<dbReference type="Pfam" id="PF09285">
    <property type="entry name" value="Elong-fact-P_C"/>
    <property type="match status" value="1"/>
</dbReference>
<dbReference type="PIRSF" id="PIRSF005901">
    <property type="entry name" value="EF-P"/>
    <property type="match status" value="1"/>
</dbReference>
<dbReference type="SMART" id="SM01185">
    <property type="entry name" value="EFP"/>
    <property type="match status" value="1"/>
</dbReference>
<dbReference type="SMART" id="SM00841">
    <property type="entry name" value="Elong-fact-P_C"/>
    <property type="match status" value="1"/>
</dbReference>
<dbReference type="SUPFAM" id="SSF50249">
    <property type="entry name" value="Nucleic acid-binding proteins"/>
    <property type="match status" value="2"/>
</dbReference>
<dbReference type="SUPFAM" id="SSF50104">
    <property type="entry name" value="Translation proteins SH3-like domain"/>
    <property type="match status" value="1"/>
</dbReference>
<dbReference type="PROSITE" id="PS01275">
    <property type="entry name" value="EFP"/>
    <property type="match status" value="1"/>
</dbReference>
<comment type="function">
    <text evidence="1">Involved in peptide bond synthesis. Stimulates efficient translation and peptide-bond synthesis on native or reconstituted 70S ribosomes in vitro. Probably functions indirectly by altering the affinity of the ribosome for aminoacyl-tRNA, thus increasing their reactivity as acceptors for peptidyl transferase.</text>
</comment>
<comment type="pathway">
    <text evidence="1">Protein biosynthesis; polypeptide chain elongation.</text>
</comment>
<comment type="subcellular location">
    <subcellularLocation>
        <location evidence="1">Cytoplasm</location>
    </subcellularLocation>
</comment>
<comment type="similarity">
    <text evidence="1">Belongs to the elongation factor P family.</text>
</comment>